<sequence>MRPADRAAQQVRPLTLTRNYTKHAEGSVLVEFGDTKVLCTATVEEGVPRFLKGQGQGWITAEYGMLPRSTHSRNAREAAKGKQGGRTLEIQRLIARSLRAAVDLKKLGEFTITLDCDVLQADGGTRTASISGACVALADALNKLVASGKLKANPMKGLVAAVSVGIVKGEALCDLEYVEDSAAETDMNVVMMEDGRMIEVQGTAEGEPFSHEELLALLDLARGGIETIFQAQKAALES</sequence>
<keyword id="KW-0548">Nucleotidyltransferase</keyword>
<keyword id="KW-0694">RNA-binding</keyword>
<keyword id="KW-0698">rRNA processing</keyword>
<keyword id="KW-0808">Transferase</keyword>
<keyword id="KW-0819">tRNA processing</keyword>
<keyword id="KW-0820">tRNA-binding</keyword>
<name>RNPH_YERPP</name>
<dbReference type="EC" id="2.7.7.56" evidence="1"/>
<dbReference type="EMBL" id="CP000668">
    <property type="protein sequence ID" value="ABP42204.1"/>
    <property type="molecule type" value="Genomic_DNA"/>
</dbReference>
<dbReference type="RefSeq" id="WP_002208997.1">
    <property type="nucleotide sequence ID" value="NZ_CP009715.1"/>
</dbReference>
<dbReference type="SMR" id="A4TSE2"/>
<dbReference type="GeneID" id="57974546"/>
<dbReference type="KEGG" id="ypp:YPDSF_3861"/>
<dbReference type="PATRIC" id="fig|386656.14.peg.657"/>
<dbReference type="GO" id="GO:0000175">
    <property type="term" value="F:3'-5'-RNA exonuclease activity"/>
    <property type="evidence" value="ECO:0007669"/>
    <property type="project" value="UniProtKB-UniRule"/>
</dbReference>
<dbReference type="GO" id="GO:0000049">
    <property type="term" value="F:tRNA binding"/>
    <property type="evidence" value="ECO:0007669"/>
    <property type="project" value="UniProtKB-UniRule"/>
</dbReference>
<dbReference type="GO" id="GO:0009022">
    <property type="term" value="F:tRNA nucleotidyltransferase activity"/>
    <property type="evidence" value="ECO:0007669"/>
    <property type="project" value="UniProtKB-UniRule"/>
</dbReference>
<dbReference type="GO" id="GO:0016075">
    <property type="term" value="P:rRNA catabolic process"/>
    <property type="evidence" value="ECO:0007669"/>
    <property type="project" value="UniProtKB-UniRule"/>
</dbReference>
<dbReference type="GO" id="GO:0006364">
    <property type="term" value="P:rRNA processing"/>
    <property type="evidence" value="ECO:0007669"/>
    <property type="project" value="UniProtKB-KW"/>
</dbReference>
<dbReference type="GO" id="GO:0008033">
    <property type="term" value="P:tRNA processing"/>
    <property type="evidence" value="ECO:0007669"/>
    <property type="project" value="UniProtKB-UniRule"/>
</dbReference>
<dbReference type="CDD" id="cd11362">
    <property type="entry name" value="RNase_PH_bact"/>
    <property type="match status" value="1"/>
</dbReference>
<dbReference type="FunFam" id="3.30.230.70:FF:000003">
    <property type="entry name" value="Ribonuclease PH"/>
    <property type="match status" value="1"/>
</dbReference>
<dbReference type="Gene3D" id="3.30.230.70">
    <property type="entry name" value="GHMP Kinase, N-terminal domain"/>
    <property type="match status" value="1"/>
</dbReference>
<dbReference type="HAMAP" id="MF_00564">
    <property type="entry name" value="RNase_PH"/>
    <property type="match status" value="1"/>
</dbReference>
<dbReference type="InterPro" id="IPR001247">
    <property type="entry name" value="ExoRNase_PH_dom1"/>
</dbReference>
<dbReference type="InterPro" id="IPR015847">
    <property type="entry name" value="ExoRNase_PH_dom2"/>
</dbReference>
<dbReference type="InterPro" id="IPR036345">
    <property type="entry name" value="ExoRNase_PH_dom2_sf"/>
</dbReference>
<dbReference type="InterPro" id="IPR027408">
    <property type="entry name" value="PNPase/RNase_PH_dom_sf"/>
</dbReference>
<dbReference type="InterPro" id="IPR020568">
    <property type="entry name" value="Ribosomal_Su5_D2-typ_SF"/>
</dbReference>
<dbReference type="InterPro" id="IPR050080">
    <property type="entry name" value="RNase_PH"/>
</dbReference>
<dbReference type="InterPro" id="IPR002381">
    <property type="entry name" value="RNase_PH_bac-type"/>
</dbReference>
<dbReference type="InterPro" id="IPR018336">
    <property type="entry name" value="RNase_PH_CS"/>
</dbReference>
<dbReference type="NCBIfam" id="TIGR01966">
    <property type="entry name" value="RNasePH"/>
    <property type="match status" value="1"/>
</dbReference>
<dbReference type="PANTHER" id="PTHR11953">
    <property type="entry name" value="EXOSOME COMPLEX COMPONENT"/>
    <property type="match status" value="1"/>
</dbReference>
<dbReference type="PANTHER" id="PTHR11953:SF0">
    <property type="entry name" value="EXOSOME COMPLEX COMPONENT RRP41"/>
    <property type="match status" value="1"/>
</dbReference>
<dbReference type="Pfam" id="PF01138">
    <property type="entry name" value="RNase_PH"/>
    <property type="match status" value="1"/>
</dbReference>
<dbReference type="Pfam" id="PF03725">
    <property type="entry name" value="RNase_PH_C"/>
    <property type="match status" value="1"/>
</dbReference>
<dbReference type="SUPFAM" id="SSF55666">
    <property type="entry name" value="Ribonuclease PH domain 2-like"/>
    <property type="match status" value="1"/>
</dbReference>
<dbReference type="SUPFAM" id="SSF54211">
    <property type="entry name" value="Ribosomal protein S5 domain 2-like"/>
    <property type="match status" value="1"/>
</dbReference>
<dbReference type="PROSITE" id="PS01277">
    <property type="entry name" value="RIBONUCLEASE_PH"/>
    <property type="match status" value="1"/>
</dbReference>
<comment type="function">
    <text evidence="1">Phosphorolytic 3'-5' exoribonuclease that plays an important role in tRNA 3'-end maturation. Removes nucleotide residues following the 3'-CCA terminus of tRNAs; can also add nucleotides to the ends of RNA molecules by using nucleoside diphosphates as substrates, but this may not be physiologically important. Probably plays a role in initiation of 16S rRNA degradation (leading to ribosome degradation) during starvation.</text>
</comment>
<comment type="catalytic activity">
    <reaction evidence="1">
        <text>tRNA(n+1) + phosphate = tRNA(n) + a ribonucleoside 5'-diphosphate</text>
        <dbReference type="Rhea" id="RHEA:10628"/>
        <dbReference type="Rhea" id="RHEA-COMP:17343"/>
        <dbReference type="Rhea" id="RHEA-COMP:17344"/>
        <dbReference type="ChEBI" id="CHEBI:43474"/>
        <dbReference type="ChEBI" id="CHEBI:57930"/>
        <dbReference type="ChEBI" id="CHEBI:173114"/>
        <dbReference type="EC" id="2.7.7.56"/>
    </reaction>
</comment>
<comment type="subunit">
    <text evidence="1">Homohexameric ring arranged as a trimer of dimers.</text>
</comment>
<comment type="similarity">
    <text evidence="1">Belongs to the RNase PH family.</text>
</comment>
<evidence type="ECO:0000255" key="1">
    <source>
        <dbReference type="HAMAP-Rule" id="MF_00564"/>
    </source>
</evidence>
<organism>
    <name type="scientific">Yersinia pestis (strain Pestoides F)</name>
    <dbReference type="NCBI Taxonomy" id="386656"/>
    <lineage>
        <taxon>Bacteria</taxon>
        <taxon>Pseudomonadati</taxon>
        <taxon>Pseudomonadota</taxon>
        <taxon>Gammaproteobacteria</taxon>
        <taxon>Enterobacterales</taxon>
        <taxon>Yersiniaceae</taxon>
        <taxon>Yersinia</taxon>
    </lineage>
</organism>
<feature type="chain" id="PRO_1000024910" description="Ribonuclease PH">
    <location>
        <begin position="1"/>
        <end position="238"/>
    </location>
</feature>
<feature type="binding site" evidence="1">
    <location>
        <position position="86"/>
    </location>
    <ligand>
        <name>phosphate</name>
        <dbReference type="ChEBI" id="CHEBI:43474"/>
        <note>substrate</note>
    </ligand>
</feature>
<feature type="binding site" evidence="1">
    <location>
        <begin position="124"/>
        <end position="126"/>
    </location>
    <ligand>
        <name>phosphate</name>
        <dbReference type="ChEBI" id="CHEBI:43474"/>
        <note>substrate</note>
    </ligand>
</feature>
<reference key="1">
    <citation type="submission" date="2007-02" db="EMBL/GenBank/DDBJ databases">
        <title>Complete sequence of chromosome of Yersinia pestis Pestoides F.</title>
        <authorList>
            <consortium name="US DOE Joint Genome Institute"/>
            <person name="Copeland A."/>
            <person name="Lucas S."/>
            <person name="Lapidus A."/>
            <person name="Barry K."/>
            <person name="Detter J.C."/>
            <person name="Glavina del Rio T."/>
            <person name="Hammon N."/>
            <person name="Israni S."/>
            <person name="Dalin E."/>
            <person name="Tice H."/>
            <person name="Pitluck S."/>
            <person name="Di Bartolo G."/>
            <person name="Chain P."/>
            <person name="Malfatti S."/>
            <person name="Shin M."/>
            <person name="Vergez L."/>
            <person name="Schmutz J."/>
            <person name="Larimer F."/>
            <person name="Land M."/>
            <person name="Hauser L."/>
            <person name="Worsham P."/>
            <person name="Chu M."/>
            <person name="Bearden S."/>
            <person name="Garcia E."/>
            <person name="Richardson P."/>
        </authorList>
    </citation>
    <scope>NUCLEOTIDE SEQUENCE [LARGE SCALE GENOMIC DNA]</scope>
    <source>
        <strain>Pestoides F</strain>
    </source>
</reference>
<protein>
    <recommendedName>
        <fullName evidence="1">Ribonuclease PH</fullName>
        <shortName evidence="1">RNase PH</shortName>
        <ecNumber evidence="1">2.7.7.56</ecNumber>
    </recommendedName>
    <alternativeName>
        <fullName evidence="1">tRNA nucleotidyltransferase</fullName>
    </alternativeName>
</protein>
<proteinExistence type="inferred from homology"/>
<gene>
    <name evidence="1" type="primary">rph</name>
    <name type="ordered locus">YPDSF_3861</name>
</gene>
<accession>A4TSE2</accession>